<comment type="function">
    <text evidence="5">Involved in disease resistance. Acts as a negative regulator of innate immunity to the rice blast fungus (Magnaporthe oryzae). Acts as a negative regulator of the pathogen-associated molecular pattern (PAMP)-triggered immunity (PTI) response through the inhibition of reactive oxygen species (ROS) accumulation and expression of defense-related genes. May function via the ubiquitin-proteasome degradation pathway.</text>
</comment>
<comment type="subunit">
    <text evidence="5">Interacts with ZFP1.</text>
</comment>
<comment type="subcellular location">
    <subcellularLocation>
        <location evidence="5">Nucleus</location>
    </subcellularLocation>
    <subcellularLocation>
        <location evidence="5">Cytoplasm</location>
    </subcellularLocation>
</comment>
<comment type="induction">
    <text evidence="5">Induced by a compatible race of the rice blast fungus (Magnaporthe oryzae).</text>
</comment>
<comment type="miscellaneous">
    <text evidence="5">Plants silencing DJA6 display enhanced resistance to the rice blast fungus (Magnaporthe oryzae) and accumulate increased levels of reactive oxygen species after elicitation with flagellin (flg22) or chitin oligomer.</text>
</comment>
<comment type="similarity">
    <text evidence="8">Belongs to the DnaJ family.</text>
</comment>
<comment type="sequence caution" evidence="8">
    <conflict type="erroneous gene model prediction">
        <sequence resource="EMBL-CDS" id="CAD41609"/>
    </conflict>
    <text>The predicted gene has been split into 2 genes: Os04g0549500 and Os04g0549600.</text>
</comment>
<sequence>MFGRVPRSNNTKYYEVLGVPKTASKDELKKAYRKAAIKNHPDKGGDPEKFKELSQAYEVLTDPEKRDIYDQYGEDALKDGMGGGSDFHNPFDIFEQFFGGGAFGGSSSRVRRQRRGEDVAHTLKVSLEDVYNGSMKKLSLSRNILCPKCKGKGTKSEAPATCYGCHGVGMRNIMRQIGLGMIQHMQTVCPECRGSGEIISDRDKCTNCRASKVIQEKKVLEVHIEKGMQHGQKIVFQGEADEAPDTVTGDIVFILQVKVHPRFKRKYDDLFIERTISLTEALCGFQFILTHLDSRQLLIKANPGEIIKPGQHKAINDEGMPHHGRPFMKGRLFVEFNVEFPESGVLSRDQCRALEMILPPKPGHQLSDMDLDQCEETTMHDVNIEEEMRRKQYQRKQEAYDEDEEEDAPRVQCAQQ</sequence>
<evidence type="ECO:0000250" key="1">
    <source>
        <dbReference type="UniProtKB" id="Q96EY1"/>
    </source>
</evidence>
<evidence type="ECO:0000255" key="2">
    <source>
        <dbReference type="PROSITE-ProRule" id="PRU00286"/>
    </source>
</evidence>
<evidence type="ECO:0000255" key="3">
    <source>
        <dbReference type="PROSITE-ProRule" id="PRU00546"/>
    </source>
</evidence>
<evidence type="ECO:0000256" key="4">
    <source>
        <dbReference type="SAM" id="MobiDB-lite"/>
    </source>
</evidence>
<evidence type="ECO:0000269" key="5">
    <source>
    </source>
</evidence>
<evidence type="ECO:0000303" key="6">
    <source>
    </source>
</evidence>
<evidence type="ECO:0000303" key="7">
    <source>
    </source>
</evidence>
<evidence type="ECO:0000305" key="8"/>
<evidence type="ECO:0000312" key="9">
    <source>
        <dbReference type="EMBL" id="BAF15399.1"/>
    </source>
</evidence>
<evidence type="ECO:0000312" key="10">
    <source>
        <dbReference type="EMBL" id="CAD41609.2"/>
    </source>
</evidence>
<evidence type="ECO:0000312" key="11">
    <source>
        <dbReference type="EMBL" id="EEE61449.1"/>
    </source>
</evidence>
<protein>
    <recommendedName>
        <fullName evidence="8">Chaperone protein dnaJ A6</fullName>
        <shortName evidence="7">OsDjA6</shortName>
    </recommendedName>
</protein>
<dbReference type="EMBL" id="EU325987">
    <property type="protein sequence ID" value="ABY52936.1"/>
    <property type="molecule type" value="mRNA"/>
</dbReference>
<dbReference type="EMBL" id="AL663000">
    <property type="protein sequence ID" value="CAD41609.2"/>
    <property type="status" value="ALT_SEQ"/>
    <property type="molecule type" value="Genomic_DNA"/>
</dbReference>
<dbReference type="EMBL" id="AP008210">
    <property type="protein sequence ID" value="BAF15399.1"/>
    <property type="molecule type" value="Genomic_DNA"/>
</dbReference>
<dbReference type="EMBL" id="AP014960">
    <property type="protein sequence ID" value="BAS90366.1"/>
    <property type="molecule type" value="Genomic_DNA"/>
</dbReference>
<dbReference type="EMBL" id="CM000141">
    <property type="protein sequence ID" value="EEE61449.1"/>
    <property type="molecule type" value="Genomic_DNA"/>
</dbReference>
<dbReference type="EMBL" id="AK101956">
    <property type="protein sequence ID" value="BAG95310.1"/>
    <property type="molecule type" value="mRNA"/>
</dbReference>
<dbReference type="RefSeq" id="XP_015635751.1">
    <property type="nucleotide sequence ID" value="XM_015780265.1"/>
</dbReference>
<dbReference type="RefSeq" id="XP_015635752.1">
    <property type="nucleotide sequence ID" value="XM_015780266.1"/>
</dbReference>
<dbReference type="SMR" id="Q0JB88"/>
<dbReference type="FunCoup" id="Q0JB88">
    <property type="interactions" value="2568"/>
</dbReference>
<dbReference type="STRING" id="39947.Q0JB88"/>
<dbReference type="PaxDb" id="39947-Q0JB88"/>
<dbReference type="EnsemblPlants" id="Os04t0549600-01">
    <property type="protein sequence ID" value="Os04t0549600-01"/>
    <property type="gene ID" value="Os04g0549600"/>
</dbReference>
<dbReference type="Gramene" id="Os04t0549600-01">
    <property type="protein sequence ID" value="Os04t0549600-01"/>
    <property type="gene ID" value="Os04g0549600"/>
</dbReference>
<dbReference type="KEGG" id="dosa:Os04g0549600"/>
<dbReference type="eggNOG" id="KOG0712">
    <property type="taxonomic scope" value="Eukaryota"/>
</dbReference>
<dbReference type="HOGENOM" id="CLU_017633_10_2_1"/>
<dbReference type="InParanoid" id="Q0JB88"/>
<dbReference type="OMA" id="CHAATIK"/>
<dbReference type="OrthoDB" id="550424at2759"/>
<dbReference type="Proteomes" id="UP000000763">
    <property type="component" value="Chromosome 4"/>
</dbReference>
<dbReference type="Proteomes" id="UP000007752">
    <property type="component" value="Chromosome 4"/>
</dbReference>
<dbReference type="Proteomes" id="UP000059680">
    <property type="component" value="Chromosome 4"/>
</dbReference>
<dbReference type="ExpressionAtlas" id="Q0JB88">
    <property type="expression patterns" value="baseline and differential"/>
</dbReference>
<dbReference type="GO" id="GO:0005737">
    <property type="term" value="C:cytoplasm"/>
    <property type="evidence" value="ECO:0000318"/>
    <property type="project" value="GO_Central"/>
</dbReference>
<dbReference type="GO" id="GO:0005829">
    <property type="term" value="C:cytosol"/>
    <property type="evidence" value="ECO:0000318"/>
    <property type="project" value="GO_Central"/>
</dbReference>
<dbReference type="GO" id="GO:0005783">
    <property type="term" value="C:endoplasmic reticulum"/>
    <property type="evidence" value="ECO:0007669"/>
    <property type="project" value="UniProtKB-ARBA"/>
</dbReference>
<dbReference type="GO" id="GO:0005634">
    <property type="term" value="C:nucleus"/>
    <property type="evidence" value="ECO:0007669"/>
    <property type="project" value="UniProtKB-SubCell"/>
</dbReference>
<dbReference type="GO" id="GO:0005524">
    <property type="term" value="F:ATP binding"/>
    <property type="evidence" value="ECO:0007669"/>
    <property type="project" value="InterPro"/>
</dbReference>
<dbReference type="GO" id="GO:0030544">
    <property type="term" value="F:Hsp70 protein binding"/>
    <property type="evidence" value="ECO:0007669"/>
    <property type="project" value="InterPro"/>
</dbReference>
<dbReference type="GO" id="GO:0051087">
    <property type="term" value="F:protein-folding chaperone binding"/>
    <property type="evidence" value="ECO:0000318"/>
    <property type="project" value="GO_Central"/>
</dbReference>
<dbReference type="GO" id="GO:0051082">
    <property type="term" value="F:unfolded protein binding"/>
    <property type="evidence" value="ECO:0007669"/>
    <property type="project" value="InterPro"/>
</dbReference>
<dbReference type="GO" id="GO:0008270">
    <property type="term" value="F:zinc ion binding"/>
    <property type="evidence" value="ECO:0007669"/>
    <property type="project" value="UniProtKB-KW"/>
</dbReference>
<dbReference type="GO" id="GO:0006952">
    <property type="term" value="P:defense response"/>
    <property type="evidence" value="ECO:0007669"/>
    <property type="project" value="UniProtKB-KW"/>
</dbReference>
<dbReference type="GO" id="GO:0042026">
    <property type="term" value="P:protein refolding"/>
    <property type="evidence" value="ECO:0000318"/>
    <property type="project" value="GO_Central"/>
</dbReference>
<dbReference type="GO" id="GO:0009408">
    <property type="term" value="P:response to heat"/>
    <property type="evidence" value="ECO:0007669"/>
    <property type="project" value="InterPro"/>
</dbReference>
<dbReference type="CDD" id="cd06257">
    <property type="entry name" value="DnaJ"/>
    <property type="match status" value="1"/>
</dbReference>
<dbReference type="CDD" id="cd10747">
    <property type="entry name" value="DnaJ_C"/>
    <property type="match status" value="1"/>
</dbReference>
<dbReference type="CDD" id="cd10719">
    <property type="entry name" value="DnaJ_zf"/>
    <property type="match status" value="1"/>
</dbReference>
<dbReference type="FunFam" id="2.60.260.20:FF:000068">
    <property type="entry name" value="Chaperone protein dnaJ 3"/>
    <property type="match status" value="1"/>
</dbReference>
<dbReference type="FunFam" id="1.10.287.110:FF:000012">
    <property type="entry name" value="dnaJ protein homolog"/>
    <property type="match status" value="1"/>
</dbReference>
<dbReference type="FunFam" id="2.10.230.10:FF:000001">
    <property type="entry name" value="DnaJ subfamily A member 2"/>
    <property type="match status" value="1"/>
</dbReference>
<dbReference type="FunFam" id="2.60.260.20:FF:000003">
    <property type="entry name" value="DnaJ subfamily A member 2"/>
    <property type="match status" value="1"/>
</dbReference>
<dbReference type="Gene3D" id="1.10.287.110">
    <property type="entry name" value="DnaJ domain"/>
    <property type="match status" value="1"/>
</dbReference>
<dbReference type="Gene3D" id="2.10.230.10">
    <property type="entry name" value="Heat shock protein DnaJ, cysteine-rich domain"/>
    <property type="match status" value="1"/>
</dbReference>
<dbReference type="Gene3D" id="2.60.260.20">
    <property type="entry name" value="Urease metallochaperone UreE, N-terminal domain"/>
    <property type="match status" value="2"/>
</dbReference>
<dbReference type="HAMAP" id="MF_01152">
    <property type="entry name" value="DnaJ"/>
    <property type="match status" value="1"/>
</dbReference>
<dbReference type="InterPro" id="IPR012724">
    <property type="entry name" value="DnaJ"/>
</dbReference>
<dbReference type="InterPro" id="IPR002939">
    <property type="entry name" value="DnaJ_C"/>
</dbReference>
<dbReference type="InterPro" id="IPR001623">
    <property type="entry name" value="DnaJ_domain"/>
</dbReference>
<dbReference type="InterPro" id="IPR018253">
    <property type="entry name" value="DnaJ_domain_CS"/>
</dbReference>
<dbReference type="InterPro" id="IPR044713">
    <property type="entry name" value="DNJA1/2-like"/>
</dbReference>
<dbReference type="InterPro" id="IPR008971">
    <property type="entry name" value="HSP40/DnaJ_pept-bd"/>
</dbReference>
<dbReference type="InterPro" id="IPR001305">
    <property type="entry name" value="HSP_DnaJ_Cys-rich_dom"/>
</dbReference>
<dbReference type="InterPro" id="IPR036410">
    <property type="entry name" value="HSP_DnaJ_Cys-rich_dom_sf"/>
</dbReference>
<dbReference type="InterPro" id="IPR036869">
    <property type="entry name" value="J_dom_sf"/>
</dbReference>
<dbReference type="PANTHER" id="PTHR43888">
    <property type="entry name" value="DNAJ-LIKE-2, ISOFORM A-RELATED"/>
    <property type="match status" value="1"/>
</dbReference>
<dbReference type="Pfam" id="PF00226">
    <property type="entry name" value="DnaJ"/>
    <property type="match status" value="1"/>
</dbReference>
<dbReference type="Pfam" id="PF01556">
    <property type="entry name" value="DnaJ_C"/>
    <property type="match status" value="1"/>
</dbReference>
<dbReference type="Pfam" id="PF00684">
    <property type="entry name" value="DnaJ_CXXCXGXG"/>
    <property type="match status" value="1"/>
</dbReference>
<dbReference type="PRINTS" id="PR00625">
    <property type="entry name" value="JDOMAIN"/>
</dbReference>
<dbReference type="SMART" id="SM00271">
    <property type="entry name" value="DnaJ"/>
    <property type="match status" value="1"/>
</dbReference>
<dbReference type="SUPFAM" id="SSF46565">
    <property type="entry name" value="Chaperone J-domain"/>
    <property type="match status" value="1"/>
</dbReference>
<dbReference type="SUPFAM" id="SSF57938">
    <property type="entry name" value="DnaJ/Hsp40 cysteine-rich domain"/>
    <property type="match status" value="1"/>
</dbReference>
<dbReference type="SUPFAM" id="SSF49493">
    <property type="entry name" value="HSP40/DnaJ peptide-binding domain"/>
    <property type="match status" value="2"/>
</dbReference>
<dbReference type="PROSITE" id="PS00636">
    <property type="entry name" value="DNAJ_1"/>
    <property type="match status" value="1"/>
</dbReference>
<dbReference type="PROSITE" id="PS50076">
    <property type="entry name" value="DNAJ_2"/>
    <property type="match status" value="1"/>
</dbReference>
<dbReference type="PROSITE" id="PS51188">
    <property type="entry name" value="ZF_CR"/>
    <property type="match status" value="1"/>
</dbReference>
<gene>
    <name evidence="7" type="primary">DJA6</name>
    <name evidence="6" type="synonym">RNB8</name>
    <name evidence="9" type="ordered locus">Os04g0549600</name>
    <name evidence="8" type="ordered locus">LOC_Os04g46390</name>
    <name evidence="11" type="ORF">OsJ_15688</name>
    <name evidence="10" type="ORF">OSJNBb0034G17.1</name>
</gene>
<name>DJA6_ORYSJ</name>
<proteinExistence type="evidence at protein level"/>
<keyword id="KW-0963">Cytoplasm</keyword>
<keyword id="KW-0945">Host-virus interaction</keyword>
<keyword id="KW-0479">Metal-binding</keyword>
<keyword id="KW-0539">Nucleus</keyword>
<keyword id="KW-0611">Plant defense</keyword>
<keyword id="KW-1185">Reference proteome</keyword>
<keyword id="KW-0677">Repeat</keyword>
<keyword id="KW-0862">Zinc</keyword>
<keyword id="KW-0863">Zinc-finger</keyword>
<feature type="chain" id="PRO_0000440256" description="Chaperone protein dnaJ A6">
    <location>
        <begin position="1"/>
        <end position="416"/>
    </location>
</feature>
<feature type="domain" description="J" evidence="2">
    <location>
        <begin position="12"/>
        <end position="73"/>
    </location>
</feature>
<feature type="repeat" description="CXXCXGXG motif 1" evidence="8">
    <location>
        <begin position="146"/>
        <end position="153"/>
    </location>
</feature>
<feature type="repeat" description="CXXCXGXG motif 2" evidence="8">
    <location>
        <begin position="162"/>
        <end position="169"/>
    </location>
</feature>
<feature type="repeat" description="CXXCXGXG motif 3" evidence="8">
    <location>
        <begin position="189"/>
        <end position="196"/>
    </location>
</feature>
<feature type="zinc finger region" description="CR-type" evidence="3">
    <location>
        <begin position="133"/>
        <end position="217"/>
    </location>
</feature>
<feature type="region of interest" description="Disordered" evidence="4">
    <location>
        <begin position="380"/>
        <end position="416"/>
    </location>
</feature>
<feature type="compositionally biased region" description="Basic and acidic residues" evidence="4">
    <location>
        <begin position="380"/>
        <end position="399"/>
    </location>
</feature>
<feature type="binding site" evidence="1">
    <location>
        <position position="146"/>
    </location>
    <ligand>
        <name>Zn(2+)</name>
        <dbReference type="ChEBI" id="CHEBI:29105"/>
        <label>1</label>
    </ligand>
</feature>
<feature type="binding site" evidence="1">
    <location>
        <position position="149"/>
    </location>
    <ligand>
        <name>Zn(2+)</name>
        <dbReference type="ChEBI" id="CHEBI:29105"/>
        <label>1</label>
    </ligand>
</feature>
<feature type="binding site" evidence="1">
    <location>
        <position position="162"/>
    </location>
    <ligand>
        <name>Zn(2+)</name>
        <dbReference type="ChEBI" id="CHEBI:29105"/>
        <label>2</label>
    </ligand>
</feature>
<feature type="binding site" evidence="1">
    <location>
        <position position="165"/>
    </location>
    <ligand>
        <name>Zn(2+)</name>
        <dbReference type="ChEBI" id="CHEBI:29105"/>
        <label>2</label>
    </ligand>
</feature>
<feature type="binding site" evidence="1">
    <location>
        <position position="189"/>
    </location>
    <ligand>
        <name>Zn(2+)</name>
        <dbReference type="ChEBI" id="CHEBI:29105"/>
        <label>2</label>
    </ligand>
</feature>
<feature type="binding site" evidence="1">
    <location>
        <position position="192"/>
    </location>
    <ligand>
        <name>Zn(2+)</name>
        <dbReference type="ChEBI" id="CHEBI:29105"/>
        <label>2</label>
    </ligand>
</feature>
<feature type="binding site" evidence="1">
    <location>
        <position position="205"/>
    </location>
    <ligand>
        <name>Zn(2+)</name>
        <dbReference type="ChEBI" id="CHEBI:29105"/>
        <label>1</label>
    </ligand>
</feature>
<feature type="binding site" evidence="1">
    <location>
        <position position="208"/>
    </location>
    <ligand>
        <name>Zn(2+)</name>
        <dbReference type="ChEBI" id="CHEBI:29105"/>
        <label>1</label>
    </ligand>
</feature>
<feature type="sequence conflict" description="In Ref. 1; ABY52936." evidence="8" ref="1">
    <original>D</original>
    <variation>N</variation>
    <location>
        <position position="403"/>
    </location>
</feature>
<reference key="1">
    <citation type="submission" date="2007-12" db="EMBL/GenBank/DDBJ databases">
        <title>Construction and characterization of a yeast two-hybrid cDNA library from rice seedling leaves.</title>
        <authorList>
            <person name="Lu L.M."/>
            <person name="Qin M.L."/>
            <person name="Lan H.H."/>
            <person name="Wang P."/>
            <person name="Niu X.Q."/>
            <person name="Wu Z.J."/>
            <person name="Xie L.H."/>
        </authorList>
    </citation>
    <scope>NUCLEOTIDE SEQUENCE [MRNA]</scope>
    <source>
        <strain>cv. Wuyujing 3</strain>
    </source>
</reference>
<reference key="2">
    <citation type="journal article" date="2002" name="Nature">
        <title>Sequence and analysis of rice chromosome 4.</title>
        <authorList>
            <person name="Feng Q."/>
            <person name="Zhang Y."/>
            <person name="Hao P."/>
            <person name="Wang S."/>
            <person name="Fu G."/>
            <person name="Huang Y."/>
            <person name="Li Y."/>
            <person name="Zhu J."/>
            <person name="Liu Y."/>
            <person name="Hu X."/>
            <person name="Jia P."/>
            <person name="Zhang Y."/>
            <person name="Zhao Q."/>
            <person name="Ying K."/>
            <person name="Yu S."/>
            <person name="Tang Y."/>
            <person name="Weng Q."/>
            <person name="Zhang L."/>
            <person name="Lu Y."/>
            <person name="Mu J."/>
            <person name="Lu Y."/>
            <person name="Zhang L.S."/>
            <person name="Yu Z."/>
            <person name="Fan D."/>
            <person name="Liu X."/>
            <person name="Lu T."/>
            <person name="Li C."/>
            <person name="Wu Y."/>
            <person name="Sun T."/>
            <person name="Lei H."/>
            <person name="Li T."/>
            <person name="Hu H."/>
            <person name="Guan J."/>
            <person name="Wu M."/>
            <person name="Zhang R."/>
            <person name="Zhou B."/>
            <person name="Chen Z."/>
            <person name="Chen L."/>
            <person name="Jin Z."/>
            <person name="Wang R."/>
            <person name="Yin H."/>
            <person name="Cai Z."/>
            <person name="Ren S."/>
            <person name="Lv G."/>
            <person name="Gu W."/>
            <person name="Zhu G."/>
            <person name="Tu Y."/>
            <person name="Jia J."/>
            <person name="Zhang Y."/>
            <person name="Chen J."/>
            <person name="Kang H."/>
            <person name="Chen X."/>
            <person name="Shao C."/>
            <person name="Sun Y."/>
            <person name="Hu Q."/>
            <person name="Zhang X."/>
            <person name="Zhang W."/>
            <person name="Wang L."/>
            <person name="Ding C."/>
            <person name="Sheng H."/>
            <person name="Gu J."/>
            <person name="Chen S."/>
            <person name="Ni L."/>
            <person name="Zhu F."/>
            <person name="Chen W."/>
            <person name="Lan L."/>
            <person name="Lai Y."/>
            <person name="Cheng Z."/>
            <person name="Gu M."/>
            <person name="Jiang J."/>
            <person name="Li J."/>
            <person name="Hong G."/>
            <person name="Xue Y."/>
            <person name="Han B."/>
        </authorList>
    </citation>
    <scope>NUCLEOTIDE SEQUENCE [LARGE SCALE GENOMIC DNA]</scope>
    <source>
        <strain>cv. Nipponbare</strain>
    </source>
</reference>
<reference key="3">
    <citation type="journal article" date="2005" name="Nature">
        <title>The map-based sequence of the rice genome.</title>
        <authorList>
            <consortium name="International rice genome sequencing project (IRGSP)"/>
        </authorList>
    </citation>
    <scope>NUCLEOTIDE SEQUENCE [LARGE SCALE GENOMIC DNA]</scope>
    <source>
        <strain>cv. Nipponbare</strain>
    </source>
</reference>
<reference key="4">
    <citation type="journal article" date="2008" name="Nucleic Acids Res.">
        <title>The rice annotation project database (RAP-DB): 2008 update.</title>
        <authorList>
            <consortium name="The rice annotation project (RAP)"/>
        </authorList>
    </citation>
    <scope>GENOME REANNOTATION</scope>
    <source>
        <strain>cv. Nipponbare</strain>
    </source>
</reference>
<reference key="5">
    <citation type="journal article" date="2013" name="Rice">
        <title>Improvement of the Oryza sativa Nipponbare reference genome using next generation sequence and optical map data.</title>
        <authorList>
            <person name="Kawahara Y."/>
            <person name="de la Bastide M."/>
            <person name="Hamilton J.P."/>
            <person name="Kanamori H."/>
            <person name="McCombie W.R."/>
            <person name="Ouyang S."/>
            <person name="Schwartz D.C."/>
            <person name="Tanaka T."/>
            <person name="Wu J."/>
            <person name="Zhou S."/>
            <person name="Childs K.L."/>
            <person name="Davidson R.M."/>
            <person name="Lin H."/>
            <person name="Quesada-Ocampo L."/>
            <person name="Vaillancourt B."/>
            <person name="Sakai H."/>
            <person name="Lee S.S."/>
            <person name="Kim J."/>
            <person name="Numa H."/>
            <person name="Itoh T."/>
            <person name="Buell C.R."/>
            <person name="Matsumoto T."/>
        </authorList>
    </citation>
    <scope>GENOME REANNOTATION</scope>
    <source>
        <strain>cv. Nipponbare</strain>
    </source>
</reference>
<reference key="6">
    <citation type="journal article" date="2005" name="PLoS Biol.">
        <title>The genomes of Oryza sativa: a history of duplications.</title>
        <authorList>
            <person name="Yu J."/>
            <person name="Wang J."/>
            <person name="Lin W."/>
            <person name="Li S."/>
            <person name="Li H."/>
            <person name="Zhou J."/>
            <person name="Ni P."/>
            <person name="Dong W."/>
            <person name="Hu S."/>
            <person name="Zeng C."/>
            <person name="Zhang J."/>
            <person name="Zhang Y."/>
            <person name="Li R."/>
            <person name="Xu Z."/>
            <person name="Li S."/>
            <person name="Li X."/>
            <person name="Zheng H."/>
            <person name="Cong L."/>
            <person name="Lin L."/>
            <person name="Yin J."/>
            <person name="Geng J."/>
            <person name="Li G."/>
            <person name="Shi J."/>
            <person name="Liu J."/>
            <person name="Lv H."/>
            <person name="Li J."/>
            <person name="Wang J."/>
            <person name="Deng Y."/>
            <person name="Ran L."/>
            <person name="Shi X."/>
            <person name="Wang X."/>
            <person name="Wu Q."/>
            <person name="Li C."/>
            <person name="Ren X."/>
            <person name="Wang J."/>
            <person name="Wang X."/>
            <person name="Li D."/>
            <person name="Liu D."/>
            <person name="Zhang X."/>
            <person name="Ji Z."/>
            <person name="Zhao W."/>
            <person name="Sun Y."/>
            <person name="Zhang Z."/>
            <person name="Bao J."/>
            <person name="Han Y."/>
            <person name="Dong L."/>
            <person name="Ji J."/>
            <person name="Chen P."/>
            <person name="Wu S."/>
            <person name="Liu J."/>
            <person name="Xiao Y."/>
            <person name="Bu D."/>
            <person name="Tan J."/>
            <person name="Yang L."/>
            <person name="Ye C."/>
            <person name="Zhang J."/>
            <person name="Xu J."/>
            <person name="Zhou Y."/>
            <person name="Yu Y."/>
            <person name="Zhang B."/>
            <person name="Zhuang S."/>
            <person name="Wei H."/>
            <person name="Liu B."/>
            <person name="Lei M."/>
            <person name="Yu H."/>
            <person name="Li Y."/>
            <person name="Xu H."/>
            <person name="Wei S."/>
            <person name="He X."/>
            <person name="Fang L."/>
            <person name="Zhang Z."/>
            <person name="Zhang Y."/>
            <person name="Huang X."/>
            <person name="Su Z."/>
            <person name="Tong W."/>
            <person name="Li J."/>
            <person name="Tong Z."/>
            <person name="Li S."/>
            <person name="Ye J."/>
            <person name="Wang L."/>
            <person name="Fang L."/>
            <person name="Lei T."/>
            <person name="Chen C.-S."/>
            <person name="Chen H.-C."/>
            <person name="Xu Z."/>
            <person name="Li H."/>
            <person name="Huang H."/>
            <person name="Zhang F."/>
            <person name="Xu H."/>
            <person name="Li N."/>
            <person name="Zhao C."/>
            <person name="Li S."/>
            <person name="Dong L."/>
            <person name="Huang Y."/>
            <person name="Li L."/>
            <person name="Xi Y."/>
            <person name="Qi Q."/>
            <person name="Li W."/>
            <person name="Zhang B."/>
            <person name="Hu W."/>
            <person name="Zhang Y."/>
            <person name="Tian X."/>
            <person name="Jiao Y."/>
            <person name="Liang X."/>
            <person name="Jin J."/>
            <person name="Gao L."/>
            <person name="Zheng W."/>
            <person name="Hao B."/>
            <person name="Liu S.-M."/>
            <person name="Wang W."/>
            <person name="Yuan L."/>
            <person name="Cao M."/>
            <person name="McDermott J."/>
            <person name="Samudrala R."/>
            <person name="Wang J."/>
            <person name="Wong G.K.-S."/>
            <person name="Yang H."/>
        </authorList>
    </citation>
    <scope>NUCLEOTIDE SEQUENCE [LARGE SCALE GENOMIC DNA]</scope>
    <source>
        <strain>cv. Nipponbare</strain>
    </source>
</reference>
<reference key="7">
    <citation type="journal article" date="2003" name="Science">
        <title>Collection, mapping, and annotation of over 28,000 cDNA clones from japonica rice.</title>
        <authorList>
            <consortium name="The rice full-length cDNA consortium"/>
        </authorList>
    </citation>
    <scope>NUCLEOTIDE SEQUENCE [LARGE SCALE MRNA]</scope>
    <source>
        <strain>cv. Nipponbare</strain>
    </source>
</reference>
<reference key="8">
    <citation type="journal article" date="2009" name="Virus Genes">
        <title>Pc4, a putative movement protein of Rice stripe virus, interacts with a type I DnaJ protein and a small Hsp of rice.</title>
        <authorList>
            <person name="Lu L."/>
            <person name="Du Z."/>
            <person name="Qin M."/>
            <person name="Wang P."/>
            <person name="Lan H."/>
            <person name="Niu X."/>
            <person name="Jia D."/>
            <person name="Xie L."/>
            <person name="Lin Q."/>
            <person name="Xie L."/>
            <person name="Wu Z."/>
        </authorList>
    </citation>
    <scope>FUNCTION</scope>
    <scope>INTERACTION WITH RICE STRIPE VIRUS PC4 AC_Q00847</scope>
</reference>
<reference key="9">
    <citation type="journal article" date="2013" name="Cell Stress Chaperones">
        <title>Functional relevance of J-protein family of rice (Oryza sativa).</title>
        <authorList>
            <person name="Sarkar N.K."/>
            <person name="Thapar U."/>
            <person name="Kundnani P."/>
            <person name="Panwar P."/>
            <person name="Grover A."/>
        </authorList>
    </citation>
    <scope>GENE FAMILY</scope>
    <scope>NOMENCLATURE</scope>
</reference>
<reference key="10">
    <citation type="journal article" date="2018" name="Mol. Plant Pathol.">
        <title>The DnaJ protein OsDjA6 negatively regulates rice innate immunity to the blast fungus Magnaporthe oryzae.</title>
        <authorList>
            <person name="Zhong X."/>
            <person name="Yang J."/>
            <person name="Shi Y."/>
            <person name="Wang X."/>
            <person name="Wang G.L."/>
        </authorList>
    </citation>
    <scope>FUNCTION</scope>
    <scope>INTERACTION WITH ZFP1</scope>
    <scope>SUBCELLULAR LOCATION</scope>
    <scope>INDUCTION BY THE RICE BLAST FUNGUS</scope>
</reference>
<accession>Q0JB88</accession>
<accession>B0FFN7</accession>
<accession>Q7X6U9</accession>
<organism>
    <name type="scientific">Oryza sativa subsp. japonica</name>
    <name type="common">Rice</name>
    <dbReference type="NCBI Taxonomy" id="39947"/>
    <lineage>
        <taxon>Eukaryota</taxon>
        <taxon>Viridiplantae</taxon>
        <taxon>Streptophyta</taxon>
        <taxon>Embryophyta</taxon>
        <taxon>Tracheophyta</taxon>
        <taxon>Spermatophyta</taxon>
        <taxon>Magnoliopsida</taxon>
        <taxon>Liliopsida</taxon>
        <taxon>Poales</taxon>
        <taxon>Poaceae</taxon>
        <taxon>BOP clade</taxon>
        <taxon>Oryzoideae</taxon>
        <taxon>Oryzeae</taxon>
        <taxon>Oryzinae</taxon>
        <taxon>Oryza</taxon>
        <taxon>Oryza sativa</taxon>
    </lineage>
</organism>